<proteinExistence type="evidence at protein level"/>
<accession>Q5EF74</accession>
<gene>
    <name evidence="2 4" type="primary">hrcA</name>
</gene>
<name>HRCA_ANASL</name>
<evidence type="ECO:0000250" key="1">
    <source>
        <dbReference type="UniProtKB" id="Q45550"/>
    </source>
</evidence>
<evidence type="ECO:0000255" key="2">
    <source>
        <dbReference type="HAMAP-Rule" id="MF_00081"/>
    </source>
</evidence>
<evidence type="ECO:0000305" key="3"/>
<evidence type="ECO:0000312" key="4">
    <source>
        <dbReference type="EMBL" id="AAX07322.1"/>
    </source>
</evidence>
<dbReference type="EMBL" id="AY897588">
    <property type="protein sequence ID" value="AAX07322.1"/>
    <property type="molecule type" value="Genomic_DNA"/>
</dbReference>
<dbReference type="SMR" id="Q5EF74"/>
<dbReference type="GO" id="GO:0003677">
    <property type="term" value="F:DNA binding"/>
    <property type="evidence" value="ECO:0007669"/>
    <property type="project" value="InterPro"/>
</dbReference>
<dbReference type="GO" id="GO:0045892">
    <property type="term" value="P:negative regulation of DNA-templated transcription"/>
    <property type="evidence" value="ECO:0007669"/>
    <property type="project" value="UniProtKB-UniRule"/>
</dbReference>
<dbReference type="Gene3D" id="3.30.450.40">
    <property type="match status" value="1"/>
</dbReference>
<dbReference type="Gene3D" id="3.30.390.60">
    <property type="entry name" value="Heat-inducible transcription repressor hrca homolog, domain 3"/>
    <property type="match status" value="1"/>
</dbReference>
<dbReference type="Gene3D" id="1.10.10.10">
    <property type="entry name" value="Winged helix-like DNA-binding domain superfamily/Winged helix DNA-binding domain"/>
    <property type="match status" value="1"/>
</dbReference>
<dbReference type="HAMAP" id="MF_00081">
    <property type="entry name" value="HrcA"/>
    <property type="match status" value="1"/>
</dbReference>
<dbReference type="InterPro" id="IPR029016">
    <property type="entry name" value="GAF-like_dom_sf"/>
</dbReference>
<dbReference type="InterPro" id="IPR002571">
    <property type="entry name" value="HrcA"/>
</dbReference>
<dbReference type="InterPro" id="IPR021153">
    <property type="entry name" value="HrcA_C"/>
</dbReference>
<dbReference type="InterPro" id="IPR036388">
    <property type="entry name" value="WH-like_DNA-bd_sf"/>
</dbReference>
<dbReference type="InterPro" id="IPR036390">
    <property type="entry name" value="WH_DNA-bd_sf"/>
</dbReference>
<dbReference type="InterPro" id="IPR023120">
    <property type="entry name" value="WHTH_transcript_rep_HrcA_IDD"/>
</dbReference>
<dbReference type="NCBIfam" id="TIGR00331">
    <property type="entry name" value="hrcA"/>
    <property type="match status" value="1"/>
</dbReference>
<dbReference type="PANTHER" id="PTHR34824">
    <property type="entry name" value="HEAT-INDUCIBLE TRANSCRIPTION REPRESSOR HRCA"/>
    <property type="match status" value="1"/>
</dbReference>
<dbReference type="PANTHER" id="PTHR34824:SF1">
    <property type="entry name" value="HEAT-INDUCIBLE TRANSCRIPTION REPRESSOR HRCA"/>
    <property type="match status" value="1"/>
</dbReference>
<dbReference type="Pfam" id="PF01628">
    <property type="entry name" value="HrcA"/>
    <property type="match status" value="1"/>
</dbReference>
<dbReference type="PIRSF" id="PIRSF005485">
    <property type="entry name" value="HrcA"/>
    <property type="match status" value="1"/>
</dbReference>
<dbReference type="SUPFAM" id="SSF55781">
    <property type="entry name" value="GAF domain-like"/>
    <property type="match status" value="1"/>
</dbReference>
<dbReference type="SUPFAM" id="SSF46785">
    <property type="entry name" value="Winged helix' DNA-binding domain"/>
    <property type="match status" value="1"/>
</dbReference>
<sequence length="357" mass="39852">MQVQLTNRQQHILWATVRHYIATAEPVGSKALIEEYDLGVSSATIRNVMGVLEKSGLLYQPHTSAGRVPSDSGYRIYVDKLITPSEVLAKEVESALQQRLQWEDWSLEILLQGAAQILASLSGCISLITMPQTNTATVRHLQLMQIEAGRIMLILVTDNYETHSKLMDLPPGRSEKPDPEVIDRELQIVSNFLNSHLRGRSLLEITTLDWSQLDREFQLYGEFLKTSVAGLANRTAAPAATQIMVRGVAEVLRQPEFSQLQQVQTIIQLLEEEQEQLWRLIFEEPELEDTNKSKVTVRIGAENPLEPIRTCSLISSTYRRGAVPLGSVGSSRPSRLDYENAIAVVAAAADYLSEAFS</sequence>
<organism>
    <name type="scientific">Anabaena sp. (strain L31)</name>
    <dbReference type="NCBI Taxonomy" id="29412"/>
    <lineage>
        <taxon>Bacteria</taxon>
        <taxon>Bacillati</taxon>
        <taxon>Cyanobacteriota</taxon>
        <taxon>Cyanophyceae</taxon>
        <taxon>Nostocales</taxon>
        <taxon>Nostocaceae</taxon>
        <taxon>Anabaena</taxon>
    </lineage>
</organism>
<keyword id="KW-0903">Direct protein sequencing</keyword>
<keyword id="KW-0678">Repressor</keyword>
<keyword id="KW-0346">Stress response</keyword>
<keyword id="KW-0804">Transcription</keyword>
<keyword id="KW-0805">Transcription regulation</keyword>
<feature type="chain" id="PRO_0000366198" description="Heat-inducible transcription repressor HrcA">
    <location>
        <begin position="1"/>
        <end position="357"/>
    </location>
</feature>
<protein>
    <recommendedName>
        <fullName evidence="2">Heat-inducible transcription repressor HrcA</fullName>
    </recommendedName>
</protein>
<reference evidence="3 4" key="1">
    <citation type="submission" date="2005-01" db="EMBL/GenBank/DDBJ databases">
        <title>Regulation of heat shock response in the nitrogen-fixing cyanobacterium, Anabaena sp. strain L-31.</title>
        <authorList>
            <person name="Rajaram H."/>
            <person name="Schumann W."/>
            <person name="Apte S.K."/>
        </authorList>
    </citation>
    <scope>NUCLEOTIDE SEQUENCE [GENOMIC DNA]</scope>
</reference>
<reference evidence="3 4" key="2">
    <citation type="submission" date="2008-12" db="UniProtKB">
        <title>Negative regulation of Hsp60 proteins of Anabaena by hrcA at CIRCE.</title>
        <authorList>
            <person name="Rajaram H."/>
            <person name="Apte S.K."/>
        </authorList>
    </citation>
    <scope>PROTEIN SEQUENCE OF 9-18; 31-46 AND 185-198</scope>
</reference>
<comment type="function">
    <text evidence="1 2">Negative regulator of class I heat shock genes (grpE-dnaK-dnaJ and groELS operons). Prevents heat-shock induction of these operons.</text>
</comment>
<comment type="similarity">
    <text evidence="2">Belongs to the HrcA family.</text>
</comment>